<proteinExistence type="inferred from homology"/>
<name>RUTF_ECOLC</name>
<evidence type="ECO:0000255" key="1">
    <source>
        <dbReference type="HAMAP-Rule" id="MF_00833"/>
    </source>
</evidence>
<comment type="function">
    <text evidence="1">Catalyzes the reduction of FMN to FMNH2 which is used to reduce pyrimidine by RutA via the Rut pathway.</text>
</comment>
<comment type="catalytic activity">
    <reaction evidence="1">
        <text>FMNH2 + NAD(+) = FMN + NADH + 2 H(+)</text>
        <dbReference type="Rhea" id="RHEA:21620"/>
        <dbReference type="ChEBI" id="CHEBI:15378"/>
        <dbReference type="ChEBI" id="CHEBI:57540"/>
        <dbReference type="ChEBI" id="CHEBI:57618"/>
        <dbReference type="ChEBI" id="CHEBI:57945"/>
        <dbReference type="ChEBI" id="CHEBI:58210"/>
        <dbReference type="EC" id="1.5.1.42"/>
    </reaction>
</comment>
<comment type="induction">
    <text evidence="1">Up-regulated by the nitrogen regulatory protein C (NtrC also called GlnG) and repressed by RutR.</text>
</comment>
<comment type="similarity">
    <text evidence="1">Belongs to the non-flavoprotein flavin reductase family. RutF subfamily.</text>
</comment>
<gene>
    <name evidence="1" type="primary">rutF</name>
    <name type="ordered locus">EcolC_2588</name>
</gene>
<organism>
    <name type="scientific">Escherichia coli (strain ATCC 8739 / DSM 1576 / NBRC 3972 / NCIMB 8545 / WDCM 00012 / Crooks)</name>
    <dbReference type="NCBI Taxonomy" id="481805"/>
    <lineage>
        <taxon>Bacteria</taxon>
        <taxon>Pseudomonadati</taxon>
        <taxon>Pseudomonadota</taxon>
        <taxon>Gammaproteobacteria</taxon>
        <taxon>Enterobacterales</taxon>
        <taxon>Enterobacteriaceae</taxon>
        <taxon>Escherichia</taxon>
    </lineage>
</organism>
<reference key="1">
    <citation type="submission" date="2008-02" db="EMBL/GenBank/DDBJ databases">
        <title>Complete sequence of Escherichia coli C str. ATCC 8739.</title>
        <authorList>
            <person name="Copeland A."/>
            <person name="Lucas S."/>
            <person name="Lapidus A."/>
            <person name="Glavina del Rio T."/>
            <person name="Dalin E."/>
            <person name="Tice H."/>
            <person name="Bruce D."/>
            <person name="Goodwin L."/>
            <person name="Pitluck S."/>
            <person name="Kiss H."/>
            <person name="Brettin T."/>
            <person name="Detter J.C."/>
            <person name="Han C."/>
            <person name="Kuske C.R."/>
            <person name="Schmutz J."/>
            <person name="Larimer F."/>
            <person name="Land M."/>
            <person name="Hauser L."/>
            <person name="Kyrpides N."/>
            <person name="Mikhailova N."/>
            <person name="Ingram L."/>
            <person name="Richardson P."/>
        </authorList>
    </citation>
    <scope>NUCLEOTIDE SEQUENCE [LARGE SCALE GENOMIC DNA]</scope>
    <source>
        <strain>ATCC 8739 / DSM 1576 / NBRC 3972 / NCIMB 8545 / WDCM 00012 / Crooks</strain>
    </source>
</reference>
<keyword id="KW-0285">Flavoprotein</keyword>
<keyword id="KW-0288">FMN</keyword>
<keyword id="KW-0520">NAD</keyword>
<keyword id="KW-0560">Oxidoreductase</keyword>
<dbReference type="EC" id="1.5.1.42" evidence="1"/>
<dbReference type="EMBL" id="CP000946">
    <property type="protein sequence ID" value="ACA78219.1"/>
    <property type="molecule type" value="Genomic_DNA"/>
</dbReference>
<dbReference type="RefSeq" id="WP_001028095.1">
    <property type="nucleotide sequence ID" value="NZ_MTFT01000050.1"/>
</dbReference>
<dbReference type="SMR" id="B1IV90"/>
<dbReference type="GeneID" id="75171083"/>
<dbReference type="KEGG" id="ecl:EcolC_2588"/>
<dbReference type="HOGENOM" id="CLU_059021_2_2_6"/>
<dbReference type="GO" id="GO:0010181">
    <property type="term" value="F:FMN binding"/>
    <property type="evidence" value="ECO:0007669"/>
    <property type="project" value="InterPro"/>
</dbReference>
<dbReference type="GO" id="GO:0052874">
    <property type="term" value="F:FMN reductase (NADH) activity"/>
    <property type="evidence" value="ECO:0007669"/>
    <property type="project" value="UniProtKB-EC"/>
</dbReference>
<dbReference type="GO" id="GO:0008752">
    <property type="term" value="F:FMN reductase [NAD(P)H] activity"/>
    <property type="evidence" value="ECO:0007669"/>
    <property type="project" value="InterPro"/>
</dbReference>
<dbReference type="GO" id="GO:0042602">
    <property type="term" value="F:riboflavin reductase (NADPH) activity"/>
    <property type="evidence" value="ECO:0007669"/>
    <property type="project" value="UniProtKB-UniRule"/>
</dbReference>
<dbReference type="GO" id="GO:0019740">
    <property type="term" value="P:nitrogen utilization"/>
    <property type="evidence" value="ECO:0007669"/>
    <property type="project" value="UniProtKB-UniRule"/>
</dbReference>
<dbReference type="GO" id="GO:0006212">
    <property type="term" value="P:uracil catabolic process"/>
    <property type="evidence" value="ECO:0007669"/>
    <property type="project" value="UniProtKB-UniRule"/>
</dbReference>
<dbReference type="FunFam" id="2.30.110.10:FF:000002">
    <property type="entry name" value="FMN reductase (NADH) RutF"/>
    <property type="match status" value="1"/>
</dbReference>
<dbReference type="Gene3D" id="2.30.110.10">
    <property type="entry name" value="Electron Transport, Fmn-binding Protein, Chain A"/>
    <property type="match status" value="1"/>
</dbReference>
<dbReference type="HAMAP" id="MF_00833">
    <property type="entry name" value="RutF"/>
    <property type="match status" value="1"/>
</dbReference>
<dbReference type="InterPro" id="IPR002563">
    <property type="entry name" value="Flavin_Rdtase-like_dom"/>
</dbReference>
<dbReference type="InterPro" id="IPR050268">
    <property type="entry name" value="NADH-dep_flavin_reductase"/>
</dbReference>
<dbReference type="InterPro" id="IPR019917">
    <property type="entry name" value="RutF"/>
</dbReference>
<dbReference type="InterPro" id="IPR012349">
    <property type="entry name" value="Split_barrel_FMN-bd"/>
</dbReference>
<dbReference type="NCBIfam" id="TIGR03615">
    <property type="entry name" value="RutF"/>
    <property type="match status" value="1"/>
</dbReference>
<dbReference type="PANTHER" id="PTHR30466">
    <property type="entry name" value="FLAVIN REDUCTASE"/>
    <property type="match status" value="1"/>
</dbReference>
<dbReference type="PANTHER" id="PTHR30466:SF1">
    <property type="entry name" value="FMN REDUCTASE (NADH) RUTF"/>
    <property type="match status" value="1"/>
</dbReference>
<dbReference type="Pfam" id="PF01613">
    <property type="entry name" value="Flavin_Reduct"/>
    <property type="match status" value="1"/>
</dbReference>
<dbReference type="SMART" id="SM00903">
    <property type="entry name" value="Flavin_Reduct"/>
    <property type="match status" value="1"/>
</dbReference>
<dbReference type="SUPFAM" id="SSF50475">
    <property type="entry name" value="FMN-binding split barrel"/>
    <property type="match status" value="1"/>
</dbReference>
<feature type="chain" id="PRO_0000402999" description="FMN reductase (NADH) RutF">
    <location>
        <begin position="1"/>
        <end position="164"/>
    </location>
</feature>
<sequence length="164" mass="17747">MNIVDQQTFRDAMSCMGAAVNIITTDGPAGRAGFTASAVCSVTDTPPTLLVCLNRGASVWPVFNENRTLCVNTLSAGQEPLSNLFGGKTPMEHRFAAARWQTGVTGCPQLEEALVSFDCRISQVVSVGTHDILFCAIEAIHRHATPYGLVWFDRSYHALMRPAC</sequence>
<accession>B1IV90</accession>
<protein>
    <recommendedName>
        <fullName evidence="1">FMN reductase (NADH) RutF</fullName>
        <ecNumber evidence="1">1.5.1.42</ecNumber>
    </recommendedName>
    <alternativeName>
        <fullName evidence="1">FMN reductase</fullName>
    </alternativeName>
    <alternativeName>
        <fullName evidence="1">NADH-flavin reductase RutF</fullName>
    </alternativeName>
    <alternativeName>
        <fullName evidence="1">NADH:flavin oxidoreductase</fullName>
    </alternativeName>
</protein>